<evidence type="ECO:0000255" key="1">
    <source>
        <dbReference type="HAMAP-Rule" id="MF_00337"/>
    </source>
</evidence>
<protein>
    <recommendedName>
        <fullName evidence="1">Exodeoxyribonuclease 7 small subunit</fullName>
        <ecNumber evidence="1">3.1.11.6</ecNumber>
    </recommendedName>
    <alternativeName>
        <fullName evidence="1">Exodeoxyribonuclease VII small subunit</fullName>
        <shortName evidence="1">Exonuclease VII small subunit</shortName>
    </alternativeName>
</protein>
<comment type="function">
    <text evidence="1">Bidirectionally degrades single-stranded DNA into large acid-insoluble oligonucleotides, which are then degraded further into small acid-soluble oligonucleotides.</text>
</comment>
<comment type="catalytic activity">
    <reaction evidence="1">
        <text>Exonucleolytic cleavage in either 5'- to 3'- or 3'- to 5'-direction to yield nucleoside 5'-phosphates.</text>
        <dbReference type="EC" id="3.1.11.6"/>
    </reaction>
</comment>
<comment type="subunit">
    <text evidence="1">Heterooligomer composed of large and small subunits.</text>
</comment>
<comment type="subcellular location">
    <subcellularLocation>
        <location evidence="1">Cytoplasm</location>
    </subcellularLocation>
</comment>
<comment type="similarity">
    <text evidence="1">Belongs to the XseB family.</text>
</comment>
<feature type="chain" id="PRO_1000119944" description="Exodeoxyribonuclease 7 small subunit">
    <location>
        <begin position="1"/>
        <end position="80"/>
    </location>
</feature>
<sequence length="80" mass="8716">MARKKASIDFEQSLADLQALVERLENGELSLEDSLAAFEQGIALTRDCQGALAQAEQKVQILLERDGELAAQPFDAEPEA</sequence>
<accession>B1J3G6</accession>
<reference key="1">
    <citation type="submission" date="2008-02" db="EMBL/GenBank/DDBJ databases">
        <title>Complete sequence of Pseudomonas putida W619.</title>
        <authorList>
            <person name="Copeland A."/>
            <person name="Lucas S."/>
            <person name="Lapidus A."/>
            <person name="Barry K."/>
            <person name="Detter J.C."/>
            <person name="Glavina del Rio T."/>
            <person name="Dalin E."/>
            <person name="Tice H."/>
            <person name="Pitluck S."/>
            <person name="Chain P."/>
            <person name="Malfatti S."/>
            <person name="Shin M."/>
            <person name="Vergez L."/>
            <person name="Schmutz J."/>
            <person name="Larimer F."/>
            <person name="Land M."/>
            <person name="Hauser L."/>
            <person name="Kyrpides N."/>
            <person name="Kim E."/>
            <person name="Taghavi S."/>
            <person name="Vangronsveld D."/>
            <person name="van der Lelie D."/>
            <person name="Richardson P."/>
        </authorList>
    </citation>
    <scope>NUCLEOTIDE SEQUENCE [LARGE SCALE GENOMIC DNA]</scope>
    <source>
        <strain>W619</strain>
    </source>
</reference>
<name>EX7S_PSEPW</name>
<dbReference type="EC" id="3.1.11.6" evidence="1"/>
<dbReference type="EMBL" id="CP000949">
    <property type="protein sequence ID" value="ACA71086.1"/>
    <property type="molecule type" value="Genomic_DNA"/>
</dbReference>
<dbReference type="SMR" id="B1J3G6"/>
<dbReference type="STRING" id="390235.PputW619_0581"/>
<dbReference type="KEGG" id="ppw:PputW619_0581"/>
<dbReference type="eggNOG" id="COG1722">
    <property type="taxonomic scope" value="Bacteria"/>
</dbReference>
<dbReference type="HOGENOM" id="CLU_145918_3_3_6"/>
<dbReference type="OrthoDB" id="9801128at2"/>
<dbReference type="GO" id="GO:0005829">
    <property type="term" value="C:cytosol"/>
    <property type="evidence" value="ECO:0007669"/>
    <property type="project" value="TreeGrafter"/>
</dbReference>
<dbReference type="GO" id="GO:0009318">
    <property type="term" value="C:exodeoxyribonuclease VII complex"/>
    <property type="evidence" value="ECO:0007669"/>
    <property type="project" value="InterPro"/>
</dbReference>
<dbReference type="GO" id="GO:0008855">
    <property type="term" value="F:exodeoxyribonuclease VII activity"/>
    <property type="evidence" value="ECO:0007669"/>
    <property type="project" value="UniProtKB-UniRule"/>
</dbReference>
<dbReference type="GO" id="GO:0006308">
    <property type="term" value="P:DNA catabolic process"/>
    <property type="evidence" value="ECO:0007669"/>
    <property type="project" value="UniProtKB-UniRule"/>
</dbReference>
<dbReference type="Gene3D" id="1.10.287.1040">
    <property type="entry name" value="Exonuclease VII, small subunit"/>
    <property type="match status" value="1"/>
</dbReference>
<dbReference type="HAMAP" id="MF_00337">
    <property type="entry name" value="Exonuc_7_S"/>
    <property type="match status" value="1"/>
</dbReference>
<dbReference type="InterPro" id="IPR003761">
    <property type="entry name" value="Exonuc_VII_S"/>
</dbReference>
<dbReference type="InterPro" id="IPR037004">
    <property type="entry name" value="Exonuc_VII_ssu_sf"/>
</dbReference>
<dbReference type="NCBIfam" id="NF002140">
    <property type="entry name" value="PRK00977.1-4"/>
    <property type="match status" value="1"/>
</dbReference>
<dbReference type="NCBIfam" id="TIGR01280">
    <property type="entry name" value="xseB"/>
    <property type="match status" value="1"/>
</dbReference>
<dbReference type="PANTHER" id="PTHR34137">
    <property type="entry name" value="EXODEOXYRIBONUCLEASE 7 SMALL SUBUNIT"/>
    <property type="match status" value="1"/>
</dbReference>
<dbReference type="PANTHER" id="PTHR34137:SF1">
    <property type="entry name" value="EXODEOXYRIBONUCLEASE 7 SMALL SUBUNIT"/>
    <property type="match status" value="1"/>
</dbReference>
<dbReference type="Pfam" id="PF02609">
    <property type="entry name" value="Exonuc_VII_S"/>
    <property type="match status" value="1"/>
</dbReference>
<dbReference type="PIRSF" id="PIRSF006488">
    <property type="entry name" value="Exonuc_VII_S"/>
    <property type="match status" value="1"/>
</dbReference>
<dbReference type="SUPFAM" id="SSF116842">
    <property type="entry name" value="XseB-like"/>
    <property type="match status" value="1"/>
</dbReference>
<proteinExistence type="inferred from homology"/>
<gene>
    <name evidence="1" type="primary">xseB</name>
    <name type="ordered locus">PputW619_0581</name>
</gene>
<organism>
    <name type="scientific">Pseudomonas putida (strain W619)</name>
    <dbReference type="NCBI Taxonomy" id="390235"/>
    <lineage>
        <taxon>Bacteria</taxon>
        <taxon>Pseudomonadati</taxon>
        <taxon>Pseudomonadota</taxon>
        <taxon>Gammaproteobacteria</taxon>
        <taxon>Pseudomonadales</taxon>
        <taxon>Pseudomonadaceae</taxon>
        <taxon>Pseudomonas</taxon>
    </lineage>
</organism>
<keyword id="KW-0963">Cytoplasm</keyword>
<keyword id="KW-0269">Exonuclease</keyword>
<keyword id="KW-0378">Hydrolase</keyword>
<keyword id="KW-0540">Nuclease</keyword>